<sequence length="514" mass="56265">MGCDGRVSGLLRRNLQPTLTYWSVFFSFGLCIAFLGPTLLDLRCQTHSSLPQISWVFFSQQLCLLLGSALGGVFKRTLAQSLWALFTSSLAISLVFAVIPFCRDVKVLASVMALAGLAMGCIDTVANMQLVRMYQKDSAVFLQVLHFFVGFGALLSPLIADPFLSEANCLPANSTANTTSRGHLFHVSRVLGQHHVDAKPWSNQTFPGLTPKDGAGTRVSYAFWIMALINLPVPMAVLMLLSKERLLTCCPQRRPLLLSADELALETQPPEKEDASSLPPKFQSHLGHEDLFSCCQRKNLRGAPYSFFAIHITGALVLFMTDGLTGAYSAFVYSYAVEKPLSVGHKVAGYLPSLFWGFITLGRLLSIPISSRMKPATMVFINVVGVVVTFLVLLIFSYNVVFLFVGTASLGLFLSSTFPSMLAYTEDSLQYKGCATTVLVTGAGVGEMVLQMLVGSIFQAQGSYSFLVCGVIFGCLAFTFYILLLFFHRMHPGLPSVPTQDRSIGMENSECYQR</sequence>
<protein>
    <recommendedName>
        <fullName>Major facilitator superfamily domain-containing protein 4A</fullName>
    </recommendedName>
    <alternativeName>
        <fullName>Major facilitator superfamily domain-containing protein 4</fullName>
    </alternativeName>
</protein>
<organism>
    <name type="scientific">Homo sapiens</name>
    <name type="common">Human</name>
    <dbReference type="NCBI Taxonomy" id="9606"/>
    <lineage>
        <taxon>Eukaryota</taxon>
        <taxon>Metazoa</taxon>
        <taxon>Chordata</taxon>
        <taxon>Craniata</taxon>
        <taxon>Vertebrata</taxon>
        <taxon>Euteleostomi</taxon>
        <taxon>Mammalia</taxon>
        <taxon>Eutheria</taxon>
        <taxon>Euarchontoglires</taxon>
        <taxon>Primates</taxon>
        <taxon>Haplorrhini</taxon>
        <taxon>Catarrhini</taxon>
        <taxon>Hominidae</taxon>
        <taxon>Homo</taxon>
    </lineage>
</organism>
<dbReference type="EMBL" id="AK091896">
    <property type="protein sequence ID" value="BAC03767.1"/>
    <property type="molecule type" value="mRNA"/>
</dbReference>
<dbReference type="EMBL" id="AK304120">
    <property type="protein sequence ID" value="BAH14109.1"/>
    <property type="molecule type" value="mRNA"/>
</dbReference>
<dbReference type="EMBL" id="AC096533">
    <property type="status" value="NOT_ANNOTATED_CDS"/>
    <property type="molecule type" value="Genomic_DNA"/>
</dbReference>
<dbReference type="EMBL" id="BC036549">
    <property type="protein sequence ID" value="AAH36549.2"/>
    <property type="molecule type" value="mRNA"/>
</dbReference>
<dbReference type="EMBL" id="AY358107">
    <property type="protein sequence ID" value="AAQ88474.1"/>
    <property type="status" value="ALT_INIT"/>
    <property type="molecule type" value="mRNA"/>
</dbReference>
<dbReference type="EMBL" id="AL713676">
    <property type="protein sequence ID" value="CAD28481.1"/>
    <property type="molecule type" value="mRNA"/>
</dbReference>
<dbReference type="CCDS" id="CCDS1455.1">
    <molecule id="Q8N468-1"/>
</dbReference>
<dbReference type="RefSeq" id="NP_857595.3">
    <molecule id="Q8N468-1"/>
    <property type="nucleotide sequence ID" value="NM_181644.4"/>
</dbReference>
<dbReference type="RefSeq" id="XP_011507531.1">
    <property type="nucleotide sequence ID" value="XM_011509229.2"/>
</dbReference>
<dbReference type="BioGRID" id="127170">
    <property type="interactions" value="268"/>
</dbReference>
<dbReference type="FunCoup" id="Q8N468">
    <property type="interactions" value="56"/>
</dbReference>
<dbReference type="IntAct" id="Q8N468">
    <property type="interactions" value="223"/>
</dbReference>
<dbReference type="MINT" id="Q8N468"/>
<dbReference type="STRING" id="9606.ENSP00000356115"/>
<dbReference type="TCDB" id="2.A.1.7.24">
    <property type="family name" value="the major facilitator superfamily (mfs)"/>
</dbReference>
<dbReference type="GlyCosmos" id="Q8N468">
    <property type="glycosylation" value="1 site, No reported glycans"/>
</dbReference>
<dbReference type="GlyGen" id="Q8N468">
    <property type="glycosylation" value="1 site"/>
</dbReference>
<dbReference type="iPTMnet" id="Q8N468"/>
<dbReference type="PhosphoSitePlus" id="Q8N468"/>
<dbReference type="BioMuta" id="MFSD4A"/>
<dbReference type="DMDM" id="124015159"/>
<dbReference type="jPOST" id="Q8N468"/>
<dbReference type="MassIVE" id="Q8N468"/>
<dbReference type="PaxDb" id="9606-ENSP00000356115"/>
<dbReference type="PeptideAtlas" id="Q8N468"/>
<dbReference type="ProteomicsDB" id="6988"/>
<dbReference type="ProteomicsDB" id="71891">
    <molecule id="Q8N468-1"/>
</dbReference>
<dbReference type="Antibodypedia" id="34569">
    <property type="antibodies" value="80 antibodies from 15 providers"/>
</dbReference>
<dbReference type="DNASU" id="148808"/>
<dbReference type="Ensembl" id="ENST00000367147.9">
    <molecule id="Q8N468-1"/>
    <property type="protein sequence ID" value="ENSP00000356115.4"/>
    <property type="gene ID" value="ENSG00000174514.13"/>
</dbReference>
<dbReference type="GeneID" id="148808"/>
<dbReference type="KEGG" id="hsa:148808"/>
<dbReference type="MANE-Select" id="ENST00000367147.9">
    <property type="protein sequence ID" value="ENSP00000356115.4"/>
    <property type="RefSeq nucleotide sequence ID" value="NM_181644.5"/>
    <property type="RefSeq protein sequence ID" value="NP_857595.3"/>
</dbReference>
<dbReference type="UCSC" id="uc001hcv.5">
    <molecule id="Q8N468-1"/>
    <property type="organism name" value="human"/>
</dbReference>
<dbReference type="AGR" id="HGNC:25433"/>
<dbReference type="CTD" id="148808"/>
<dbReference type="DisGeNET" id="148808"/>
<dbReference type="GeneCards" id="MFSD4A"/>
<dbReference type="HGNC" id="HGNC:25433">
    <property type="gene designation" value="MFSD4A"/>
</dbReference>
<dbReference type="HPA" id="ENSG00000174514">
    <property type="expression patterns" value="Group enriched (brain, kidney, stomach)"/>
</dbReference>
<dbReference type="MIM" id="620299">
    <property type="type" value="gene"/>
</dbReference>
<dbReference type="neXtProt" id="NX_Q8N468"/>
<dbReference type="OpenTargets" id="ENSG00000174514"/>
<dbReference type="PharmGKB" id="PA142671465"/>
<dbReference type="VEuPathDB" id="HostDB:ENSG00000174514"/>
<dbReference type="eggNOG" id="ENOG502QRVK">
    <property type="taxonomic scope" value="Eukaryota"/>
</dbReference>
<dbReference type="GeneTree" id="ENSGT00530000063320"/>
<dbReference type="InParanoid" id="Q8N468"/>
<dbReference type="OMA" id="WRWDARV"/>
<dbReference type="OrthoDB" id="413079at2759"/>
<dbReference type="PAN-GO" id="Q8N468">
    <property type="GO annotations" value="1 GO annotation based on evolutionary models"/>
</dbReference>
<dbReference type="PhylomeDB" id="Q8N468"/>
<dbReference type="TreeFam" id="TF314613"/>
<dbReference type="PathwayCommons" id="Q8N468"/>
<dbReference type="SignaLink" id="Q8N468"/>
<dbReference type="BioGRID-ORCS" id="148808">
    <property type="hits" value="12 hits in 1139 CRISPR screens"/>
</dbReference>
<dbReference type="ChiTaRS" id="MFSD4A">
    <property type="organism name" value="human"/>
</dbReference>
<dbReference type="GenomeRNAi" id="148808"/>
<dbReference type="Pharos" id="Q8N468">
    <property type="development level" value="Tdark"/>
</dbReference>
<dbReference type="PRO" id="PR:Q8N468"/>
<dbReference type="Proteomes" id="UP000005640">
    <property type="component" value="Chromosome 1"/>
</dbReference>
<dbReference type="RNAct" id="Q8N468">
    <property type="molecule type" value="protein"/>
</dbReference>
<dbReference type="Bgee" id="ENSG00000174514">
    <property type="expression patterns" value="Expressed in palpebral conjunctiva and 177 other cell types or tissues"/>
</dbReference>
<dbReference type="ExpressionAtlas" id="Q8N468">
    <property type="expression patterns" value="baseline and differential"/>
</dbReference>
<dbReference type="GO" id="GO:0016020">
    <property type="term" value="C:membrane"/>
    <property type="evidence" value="ECO:0007669"/>
    <property type="project" value="UniProtKB-SubCell"/>
</dbReference>
<dbReference type="GO" id="GO:0022857">
    <property type="term" value="F:transmembrane transporter activity"/>
    <property type="evidence" value="ECO:0007669"/>
    <property type="project" value="InterPro"/>
</dbReference>
<dbReference type="CDD" id="cd17453">
    <property type="entry name" value="MFS_MFSD4A"/>
    <property type="match status" value="1"/>
</dbReference>
<dbReference type="Gene3D" id="1.20.1250.20">
    <property type="entry name" value="MFS general substrate transporter like domains"/>
    <property type="match status" value="1"/>
</dbReference>
<dbReference type="InterPro" id="IPR011701">
    <property type="entry name" value="MFS"/>
</dbReference>
<dbReference type="InterPro" id="IPR036259">
    <property type="entry name" value="MFS_trans_sf"/>
</dbReference>
<dbReference type="PANTHER" id="PTHR23121:SF10">
    <property type="entry name" value="MAJOR FACILITATOR SUPERFAMILY DOMAIN-CONTAINING PROTEIN 4A"/>
    <property type="match status" value="1"/>
</dbReference>
<dbReference type="PANTHER" id="PTHR23121">
    <property type="entry name" value="SODIUM-DEPENDENT GLUCOSE TRANSPORTER 1"/>
    <property type="match status" value="1"/>
</dbReference>
<dbReference type="Pfam" id="PF07690">
    <property type="entry name" value="MFS_1"/>
    <property type="match status" value="1"/>
</dbReference>
<dbReference type="SUPFAM" id="SSF103473">
    <property type="entry name" value="MFS general substrate transporter"/>
    <property type="match status" value="1"/>
</dbReference>
<accession>Q8N468</accession>
<accession>B7Z8X3</accession>
<accession>Q6UY25</accession>
<accession>Q8NAY0</accession>
<accession>Q8TCP4</accession>
<evidence type="ECO:0000255" key="1"/>
<evidence type="ECO:0000269" key="2">
    <source>
    </source>
</evidence>
<evidence type="ECO:0000269" key="3">
    <source>
    </source>
</evidence>
<evidence type="ECO:0000303" key="4">
    <source>
    </source>
</evidence>
<evidence type="ECO:0000305" key="5"/>
<evidence type="ECO:0000312" key="6">
    <source>
        <dbReference type="HGNC" id="HGNC:25433"/>
    </source>
</evidence>
<comment type="subcellular location">
    <subcellularLocation>
        <location evidence="5">Membrane</location>
        <topology evidence="5">Multi-pass membrane protein</topology>
    </subcellularLocation>
</comment>
<comment type="alternative products">
    <event type="alternative splicing"/>
    <isoform>
        <id>Q8N468-1</id>
        <name>1</name>
        <sequence type="displayed"/>
    </isoform>
    <isoform>
        <id>Q8N468-2</id>
        <name>2</name>
        <sequence type="described" ref="VSP_057053"/>
    </isoform>
</comment>
<comment type="similarity">
    <text evidence="5">Belongs to the major facilitator superfamily.</text>
</comment>
<comment type="sequence caution" evidence="5">
    <conflict type="erroneous initiation">
        <sequence resource="EMBL-CDS" id="AAQ88474"/>
    </conflict>
</comment>
<gene>
    <name evidence="6" type="primary">MFSD4A</name>
    <name type="synonym">MFSD4</name>
    <name type="ORF">UNQ3064/PRO9894</name>
</gene>
<name>MFD4A_HUMAN</name>
<feature type="chain" id="PRO_0000273395" description="Major facilitator superfamily domain-containing protein 4A">
    <location>
        <begin position="1"/>
        <end position="514"/>
    </location>
</feature>
<feature type="transmembrane region" description="Helical" evidence="1">
    <location>
        <begin position="19"/>
        <end position="39"/>
    </location>
</feature>
<feature type="transmembrane region" description="Helical" evidence="1">
    <location>
        <begin position="53"/>
        <end position="73"/>
    </location>
</feature>
<feature type="transmembrane region" description="Helical" evidence="1">
    <location>
        <begin position="82"/>
        <end position="102"/>
    </location>
</feature>
<feature type="transmembrane region" description="Helical" evidence="1">
    <location>
        <begin position="107"/>
        <end position="127"/>
    </location>
</feature>
<feature type="transmembrane region" description="Helical" evidence="1">
    <location>
        <begin position="139"/>
        <end position="159"/>
    </location>
</feature>
<feature type="transmembrane region" description="Helical" evidence="1">
    <location>
        <begin position="221"/>
        <end position="241"/>
    </location>
</feature>
<feature type="transmembrane region" description="Helical" evidence="1">
    <location>
        <begin position="307"/>
        <end position="327"/>
    </location>
</feature>
<feature type="transmembrane region" description="Helical" evidence="1">
    <location>
        <begin position="347"/>
        <end position="367"/>
    </location>
</feature>
<feature type="transmembrane region" description="Helical" evidence="1">
    <location>
        <begin position="376"/>
        <end position="396"/>
    </location>
</feature>
<feature type="transmembrane region" description="Helical" evidence="1">
    <location>
        <begin position="400"/>
        <end position="420"/>
    </location>
</feature>
<feature type="transmembrane region" description="Helical" evidence="1">
    <location>
        <begin position="438"/>
        <end position="458"/>
    </location>
</feature>
<feature type="transmembrane region" description="Helical" evidence="1">
    <location>
        <begin position="466"/>
        <end position="486"/>
    </location>
</feature>
<feature type="glycosylation site" description="N-linked (GlcNAc...) asparagine" evidence="1">
    <location>
        <position position="177"/>
    </location>
</feature>
<feature type="splice variant" id="VSP_057053" description="In isoform 2." evidence="4">
    <location>
        <begin position="144"/>
        <end position="230"/>
    </location>
</feature>
<feature type="sequence variant" id="VAR_030142" description="In dbSNP:rs17857119." evidence="3">
    <original>L</original>
    <variation>I</variation>
    <location>
        <position position="228"/>
    </location>
</feature>
<feature type="sequence variant" id="VAR_030143" description="In dbSNP:rs7526132." evidence="2 3">
    <original>G</original>
    <variation>A</variation>
    <location>
        <position position="314"/>
    </location>
</feature>
<feature type="sequence conflict" description="In Ref. 1; BAC03767." evidence="5" ref="1">
    <original>N</original>
    <variation>D</variation>
    <location>
        <position position="230"/>
    </location>
</feature>
<proteinExistence type="evidence at protein level"/>
<reference key="1">
    <citation type="journal article" date="2004" name="Nat. Genet.">
        <title>Complete sequencing and characterization of 21,243 full-length human cDNAs.</title>
        <authorList>
            <person name="Ota T."/>
            <person name="Suzuki Y."/>
            <person name="Nishikawa T."/>
            <person name="Otsuki T."/>
            <person name="Sugiyama T."/>
            <person name="Irie R."/>
            <person name="Wakamatsu A."/>
            <person name="Hayashi K."/>
            <person name="Sato H."/>
            <person name="Nagai K."/>
            <person name="Kimura K."/>
            <person name="Makita H."/>
            <person name="Sekine M."/>
            <person name="Obayashi M."/>
            <person name="Nishi T."/>
            <person name="Shibahara T."/>
            <person name="Tanaka T."/>
            <person name="Ishii S."/>
            <person name="Yamamoto J."/>
            <person name="Saito K."/>
            <person name="Kawai Y."/>
            <person name="Isono Y."/>
            <person name="Nakamura Y."/>
            <person name="Nagahari K."/>
            <person name="Murakami K."/>
            <person name="Yasuda T."/>
            <person name="Iwayanagi T."/>
            <person name="Wagatsuma M."/>
            <person name="Shiratori A."/>
            <person name="Sudo H."/>
            <person name="Hosoiri T."/>
            <person name="Kaku Y."/>
            <person name="Kodaira H."/>
            <person name="Kondo H."/>
            <person name="Sugawara M."/>
            <person name="Takahashi M."/>
            <person name="Kanda K."/>
            <person name="Yokoi T."/>
            <person name="Furuya T."/>
            <person name="Kikkawa E."/>
            <person name="Omura Y."/>
            <person name="Abe K."/>
            <person name="Kamihara K."/>
            <person name="Katsuta N."/>
            <person name="Sato K."/>
            <person name="Tanikawa M."/>
            <person name="Yamazaki M."/>
            <person name="Ninomiya K."/>
            <person name="Ishibashi T."/>
            <person name="Yamashita H."/>
            <person name="Murakawa K."/>
            <person name="Fujimori K."/>
            <person name="Tanai H."/>
            <person name="Kimata M."/>
            <person name="Watanabe M."/>
            <person name="Hiraoka S."/>
            <person name="Chiba Y."/>
            <person name="Ishida S."/>
            <person name="Ono Y."/>
            <person name="Takiguchi S."/>
            <person name="Watanabe S."/>
            <person name="Yosida M."/>
            <person name="Hotuta T."/>
            <person name="Kusano J."/>
            <person name="Kanehori K."/>
            <person name="Takahashi-Fujii A."/>
            <person name="Hara H."/>
            <person name="Tanase T.-O."/>
            <person name="Nomura Y."/>
            <person name="Togiya S."/>
            <person name="Komai F."/>
            <person name="Hara R."/>
            <person name="Takeuchi K."/>
            <person name="Arita M."/>
            <person name="Imose N."/>
            <person name="Musashino K."/>
            <person name="Yuuki H."/>
            <person name="Oshima A."/>
            <person name="Sasaki N."/>
            <person name="Aotsuka S."/>
            <person name="Yoshikawa Y."/>
            <person name="Matsunawa H."/>
            <person name="Ichihara T."/>
            <person name="Shiohata N."/>
            <person name="Sano S."/>
            <person name="Moriya S."/>
            <person name="Momiyama H."/>
            <person name="Satoh N."/>
            <person name="Takami S."/>
            <person name="Terashima Y."/>
            <person name="Suzuki O."/>
            <person name="Nakagawa S."/>
            <person name="Senoh A."/>
            <person name="Mizoguchi H."/>
            <person name="Goto Y."/>
            <person name="Shimizu F."/>
            <person name="Wakebe H."/>
            <person name="Hishigaki H."/>
            <person name="Watanabe T."/>
            <person name="Sugiyama A."/>
            <person name="Takemoto M."/>
            <person name="Kawakami B."/>
            <person name="Yamazaki M."/>
            <person name="Watanabe K."/>
            <person name="Kumagai A."/>
            <person name="Itakura S."/>
            <person name="Fukuzumi Y."/>
            <person name="Fujimori Y."/>
            <person name="Komiyama M."/>
            <person name="Tashiro H."/>
            <person name="Tanigami A."/>
            <person name="Fujiwara T."/>
            <person name="Ono T."/>
            <person name="Yamada K."/>
            <person name="Fujii Y."/>
            <person name="Ozaki K."/>
            <person name="Hirao M."/>
            <person name="Ohmori Y."/>
            <person name="Kawabata A."/>
            <person name="Hikiji T."/>
            <person name="Kobatake N."/>
            <person name="Inagaki H."/>
            <person name="Ikema Y."/>
            <person name="Okamoto S."/>
            <person name="Okitani R."/>
            <person name="Kawakami T."/>
            <person name="Noguchi S."/>
            <person name="Itoh T."/>
            <person name="Shigeta K."/>
            <person name="Senba T."/>
            <person name="Matsumura K."/>
            <person name="Nakajima Y."/>
            <person name="Mizuno T."/>
            <person name="Morinaga M."/>
            <person name="Sasaki M."/>
            <person name="Togashi T."/>
            <person name="Oyama M."/>
            <person name="Hata H."/>
            <person name="Watanabe M."/>
            <person name="Komatsu T."/>
            <person name="Mizushima-Sugano J."/>
            <person name="Satoh T."/>
            <person name="Shirai Y."/>
            <person name="Takahashi Y."/>
            <person name="Nakagawa K."/>
            <person name="Okumura K."/>
            <person name="Nagase T."/>
            <person name="Nomura N."/>
            <person name="Kikuchi H."/>
            <person name="Masuho Y."/>
            <person name="Yamashita R."/>
            <person name="Nakai K."/>
            <person name="Yada T."/>
            <person name="Nakamura Y."/>
            <person name="Ohara O."/>
            <person name="Isogai T."/>
            <person name="Sugano S."/>
        </authorList>
    </citation>
    <scope>NUCLEOTIDE SEQUENCE [LARGE SCALE MRNA] (ISOFORMS 1 AND 2)</scope>
    <source>
        <tissue>Kidney</tissue>
        <tissue>Trachea</tissue>
    </source>
</reference>
<reference key="2">
    <citation type="journal article" date="2006" name="Nature">
        <title>The DNA sequence and biological annotation of human chromosome 1.</title>
        <authorList>
            <person name="Gregory S.G."/>
            <person name="Barlow K.F."/>
            <person name="McLay K.E."/>
            <person name="Kaul R."/>
            <person name="Swarbreck D."/>
            <person name="Dunham A."/>
            <person name="Scott C.E."/>
            <person name="Howe K.L."/>
            <person name="Woodfine K."/>
            <person name="Spencer C.C.A."/>
            <person name="Jones M.C."/>
            <person name="Gillson C."/>
            <person name="Searle S."/>
            <person name="Zhou Y."/>
            <person name="Kokocinski F."/>
            <person name="McDonald L."/>
            <person name="Evans R."/>
            <person name="Phillips K."/>
            <person name="Atkinson A."/>
            <person name="Cooper R."/>
            <person name="Jones C."/>
            <person name="Hall R.E."/>
            <person name="Andrews T.D."/>
            <person name="Lloyd C."/>
            <person name="Ainscough R."/>
            <person name="Almeida J.P."/>
            <person name="Ambrose K.D."/>
            <person name="Anderson F."/>
            <person name="Andrew R.W."/>
            <person name="Ashwell R.I.S."/>
            <person name="Aubin K."/>
            <person name="Babbage A.K."/>
            <person name="Bagguley C.L."/>
            <person name="Bailey J."/>
            <person name="Beasley H."/>
            <person name="Bethel G."/>
            <person name="Bird C.P."/>
            <person name="Bray-Allen S."/>
            <person name="Brown J.Y."/>
            <person name="Brown A.J."/>
            <person name="Buckley D."/>
            <person name="Burton J."/>
            <person name="Bye J."/>
            <person name="Carder C."/>
            <person name="Chapman J.C."/>
            <person name="Clark S.Y."/>
            <person name="Clarke G."/>
            <person name="Clee C."/>
            <person name="Cobley V."/>
            <person name="Collier R.E."/>
            <person name="Corby N."/>
            <person name="Coville G.J."/>
            <person name="Davies J."/>
            <person name="Deadman R."/>
            <person name="Dunn M."/>
            <person name="Earthrowl M."/>
            <person name="Ellington A.G."/>
            <person name="Errington H."/>
            <person name="Frankish A."/>
            <person name="Frankland J."/>
            <person name="French L."/>
            <person name="Garner P."/>
            <person name="Garnett J."/>
            <person name="Gay L."/>
            <person name="Ghori M.R.J."/>
            <person name="Gibson R."/>
            <person name="Gilby L.M."/>
            <person name="Gillett W."/>
            <person name="Glithero R.J."/>
            <person name="Grafham D.V."/>
            <person name="Griffiths C."/>
            <person name="Griffiths-Jones S."/>
            <person name="Grocock R."/>
            <person name="Hammond S."/>
            <person name="Harrison E.S.I."/>
            <person name="Hart E."/>
            <person name="Haugen E."/>
            <person name="Heath P.D."/>
            <person name="Holmes S."/>
            <person name="Holt K."/>
            <person name="Howden P.J."/>
            <person name="Hunt A.R."/>
            <person name="Hunt S.E."/>
            <person name="Hunter G."/>
            <person name="Isherwood J."/>
            <person name="James R."/>
            <person name="Johnson C."/>
            <person name="Johnson D."/>
            <person name="Joy A."/>
            <person name="Kay M."/>
            <person name="Kershaw J.K."/>
            <person name="Kibukawa M."/>
            <person name="Kimberley A.M."/>
            <person name="King A."/>
            <person name="Knights A.J."/>
            <person name="Lad H."/>
            <person name="Laird G."/>
            <person name="Lawlor S."/>
            <person name="Leongamornlert D.A."/>
            <person name="Lloyd D.M."/>
            <person name="Loveland J."/>
            <person name="Lovell J."/>
            <person name="Lush M.J."/>
            <person name="Lyne R."/>
            <person name="Martin S."/>
            <person name="Mashreghi-Mohammadi M."/>
            <person name="Matthews L."/>
            <person name="Matthews N.S.W."/>
            <person name="McLaren S."/>
            <person name="Milne S."/>
            <person name="Mistry S."/>
            <person name="Moore M.J.F."/>
            <person name="Nickerson T."/>
            <person name="O'Dell C.N."/>
            <person name="Oliver K."/>
            <person name="Palmeiri A."/>
            <person name="Palmer S.A."/>
            <person name="Parker A."/>
            <person name="Patel D."/>
            <person name="Pearce A.V."/>
            <person name="Peck A.I."/>
            <person name="Pelan S."/>
            <person name="Phelps K."/>
            <person name="Phillimore B.J."/>
            <person name="Plumb R."/>
            <person name="Rajan J."/>
            <person name="Raymond C."/>
            <person name="Rouse G."/>
            <person name="Saenphimmachak C."/>
            <person name="Sehra H.K."/>
            <person name="Sheridan E."/>
            <person name="Shownkeen R."/>
            <person name="Sims S."/>
            <person name="Skuce C.D."/>
            <person name="Smith M."/>
            <person name="Steward C."/>
            <person name="Subramanian S."/>
            <person name="Sycamore N."/>
            <person name="Tracey A."/>
            <person name="Tromans A."/>
            <person name="Van Helmond Z."/>
            <person name="Wall M."/>
            <person name="Wallis J.M."/>
            <person name="White S."/>
            <person name="Whitehead S.L."/>
            <person name="Wilkinson J.E."/>
            <person name="Willey D.L."/>
            <person name="Williams H."/>
            <person name="Wilming L."/>
            <person name="Wray P.W."/>
            <person name="Wu Z."/>
            <person name="Coulson A."/>
            <person name="Vaudin M."/>
            <person name="Sulston J.E."/>
            <person name="Durbin R.M."/>
            <person name="Hubbard T."/>
            <person name="Wooster R."/>
            <person name="Dunham I."/>
            <person name="Carter N.P."/>
            <person name="McVean G."/>
            <person name="Ross M.T."/>
            <person name="Harrow J."/>
            <person name="Olson M.V."/>
            <person name="Beck S."/>
            <person name="Rogers J."/>
            <person name="Bentley D.R."/>
        </authorList>
    </citation>
    <scope>NUCLEOTIDE SEQUENCE [LARGE SCALE GENOMIC DNA]</scope>
</reference>
<reference key="3">
    <citation type="journal article" date="2004" name="Genome Res.">
        <title>The status, quality, and expansion of the NIH full-length cDNA project: the Mammalian Gene Collection (MGC).</title>
        <authorList>
            <consortium name="The MGC Project Team"/>
        </authorList>
    </citation>
    <scope>NUCLEOTIDE SEQUENCE [LARGE SCALE MRNA] (ISOFORM 1)</scope>
    <scope>VARIANTS ILE-228 AND ALA-314</scope>
    <source>
        <tissue>Brain</tissue>
    </source>
</reference>
<reference key="4">
    <citation type="journal article" date="2003" name="Genome Res.">
        <title>The secreted protein discovery initiative (SPDI), a large-scale effort to identify novel human secreted and transmembrane proteins: a bioinformatics assessment.</title>
        <authorList>
            <person name="Clark H.F."/>
            <person name="Gurney A.L."/>
            <person name="Abaya E."/>
            <person name="Baker K."/>
            <person name="Baldwin D.T."/>
            <person name="Brush J."/>
            <person name="Chen J."/>
            <person name="Chow B."/>
            <person name="Chui C."/>
            <person name="Crowley C."/>
            <person name="Currell B."/>
            <person name="Deuel B."/>
            <person name="Dowd P."/>
            <person name="Eaton D."/>
            <person name="Foster J.S."/>
            <person name="Grimaldi C."/>
            <person name="Gu Q."/>
            <person name="Hass P.E."/>
            <person name="Heldens S."/>
            <person name="Huang A."/>
            <person name="Kim H.S."/>
            <person name="Klimowski L."/>
            <person name="Jin Y."/>
            <person name="Johnson S."/>
            <person name="Lee J."/>
            <person name="Lewis L."/>
            <person name="Liao D."/>
            <person name="Mark M.R."/>
            <person name="Robbie E."/>
            <person name="Sanchez C."/>
            <person name="Schoenfeld J."/>
            <person name="Seshagiri S."/>
            <person name="Simmons L."/>
            <person name="Singh J."/>
            <person name="Smith V."/>
            <person name="Stinson J."/>
            <person name="Vagts A."/>
            <person name="Vandlen R.L."/>
            <person name="Watanabe C."/>
            <person name="Wieand D."/>
            <person name="Woods K."/>
            <person name="Xie M.-H."/>
            <person name="Yansura D.G."/>
            <person name="Yi S."/>
            <person name="Yu G."/>
            <person name="Yuan J."/>
            <person name="Zhang M."/>
            <person name="Zhang Z."/>
            <person name="Goddard A.D."/>
            <person name="Wood W.I."/>
            <person name="Godowski P.J."/>
            <person name="Gray A.M."/>
        </authorList>
    </citation>
    <scope>NUCLEOTIDE SEQUENCE [LARGE SCALE MRNA] OF 177-514 (ISOFORM 1)</scope>
    <scope>VARIANT ALA-314</scope>
</reference>
<reference key="5">
    <citation type="journal article" date="2007" name="BMC Genomics">
        <title>The full-ORF clone resource of the German cDNA consortium.</title>
        <authorList>
            <person name="Bechtel S."/>
            <person name="Rosenfelder H."/>
            <person name="Duda A."/>
            <person name="Schmidt C.P."/>
            <person name="Ernst U."/>
            <person name="Wellenreuther R."/>
            <person name="Mehrle A."/>
            <person name="Schuster C."/>
            <person name="Bahr A."/>
            <person name="Bloecker H."/>
            <person name="Heubner D."/>
            <person name="Hoerlein A."/>
            <person name="Michel G."/>
            <person name="Wedler H."/>
            <person name="Koehrer K."/>
            <person name="Ottenwaelder B."/>
            <person name="Poustka A."/>
            <person name="Wiemann S."/>
            <person name="Schupp I."/>
        </authorList>
    </citation>
    <scope>NUCLEOTIDE SEQUENCE [LARGE SCALE MRNA] OF 204-514 (ISOFORM 1)</scope>
    <source>
        <tissue>Amygdala</tissue>
    </source>
</reference>
<keyword id="KW-0025">Alternative splicing</keyword>
<keyword id="KW-0325">Glycoprotein</keyword>
<keyword id="KW-0472">Membrane</keyword>
<keyword id="KW-1267">Proteomics identification</keyword>
<keyword id="KW-1185">Reference proteome</keyword>
<keyword id="KW-0812">Transmembrane</keyword>
<keyword id="KW-1133">Transmembrane helix</keyword>
<keyword id="KW-0813">Transport</keyword>